<protein>
    <recommendedName>
        <fullName evidence="1">Acetylglutamate kinase</fullName>
        <ecNumber evidence="1">2.7.2.8</ecNumber>
    </recommendedName>
    <alternativeName>
        <fullName evidence="1">N-acetyl-L-glutamate 5-phosphotransferase</fullName>
    </alternativeName>
    <alternativeName>
        <fullName evidence="1">NAG kinase</fullName>
        <shortName evidence="1">NAGK</shortName>
    </alternativeName>
</protein>
<keyword id="KW-0028">Amino-acid biosynthesis</keyword>
<keyword id="KW-0055">Arginine biosynthesis</keyword>
<keyword id="KW-0067">ATP-binding</keyword>
<keyword id="KW-0963">Cytoplasm</keyword>
<keyword id="KW-0418">Kinase</keyword>
<keyword id="KW-0547">Nucleotide-binding</keyword>
<keyword id="KW-0808">Transferase</keyword>
<proteinExistence type="inferred from homology"/>
<evidence type="ECO:0000255" key="1">
    <source>
        <dbReference type="HAMAP-Rule" id="MF_00082"/>
    </source>
</evidence>
<evidence type="ECO:0000305" key="2"/>
<gene>
    <name evidence="1" type="primary">argB</name>
    <name type="ordered locus">YPTB0111</name>
</gene>
<accession>Q66G71</accession>
<feature type="chain" id="PRO_0000112690" description="Acetylglutamate kinase">
    <location>
        <begin position="1"/>
        <end position="258"/>
    </location>
</feature>
<feature type="binding site" evidence="1">
    <location>
        <begin position="44"/>
        <end position="45"/>
    </location>
    <ligand>
        <name>substrate</name>
    </ligand>
</feature>
<feature type="binding site" evidence="1">
    <location>
        <position position="66"/>
    </location>
    <ligand>
        <name>substrate</name>
    </ligand>
</feature>
<feature type="binding site" evidence="1">
    <location>
        <position position="158"/>
    </location>
    <ligand>
        <name>substrate</name>
    </ligand>
</feature>
<feature type="binding site" evidence="1">
    <location>
        <begin position="181"/>
        <end position="186"/>
    </location>
    <ligand>
        <name>ATP</name>
        <dbReference type="ChEBI" id="CHEBI:30616"/>
    </ligand>
</feature>
<feature type="binding site" evidence="1">
    <location>
        <begin position="209"/>
        <end position="211"/>
    </location>
    <ligand>
        <name>ATP</name>
        <dbReference type="ChEBI" id="CHEBI:30616"/>
    </ligand>
</feature>
<feature type="site" description="Transition state stabilizer" evidence="1">
    <location>
        <position position="8"/>
    </location>
</feature>
<feature type="site" description="Transition state stabilizer" evidence="1">
    <location>
        <position position="217"/>
    </location>
</feature>
<sequence>MMNPLVIKLGGVLLDSEEALERLFTALVTYREKHERPLVIMHGGGCLVDELMKRLALPVVKKNGLRVTPADQIDIITGALAGTANKTLLAWAVKHQINAVGLCLADGNTVTVTLLDAELGHVGKAQPGSAALVQTLLAAGYMPIISSIGITVEGQLMNVNADQAATALAATLGADLILLSDVSGILDGKGQRIAEMTAQKAEQLIAQGIITDGMVVKVNAALDAARSLGRPVDIASWRHSEQLPALFNGVPIGTRISV</sequence>
<organism>
    <name type="scientific">Yersinia pseudotuberculosis serotype I (strain IP32953)</name>
    <dbReference type="NCBI Taxonomy" id="273123"/>
    <lineage>
        <taxon>Bacteria</taxon>
        <taxon>Pseudomonadati</taxon>
        <taxon>Pseudomonadota</taxon>
        <taxon>Gammaproteobacteria</taxon>
        <taxon>Enterobacterales</taxon>
        <taxon>Yersiniaceae</taxon>
        <taxon>Yersinia</taxon>
    </lineage>
</organism>
<comment type="function">
    <text evidence="1">Catalyzes the ATP-dependent phosphorylation of N-acetyl-L-glutamate.</text>
</comment>
<comment type="catalytic activity">
    <reaction evidence="1">
        <text>N-acetyl-L-glutamate + ATP = N-acetyl-L-glutamyl 5-phosphate + ADP</text>
        <dbReference type="Rhea" id="RHEA:14629"/>
        <dbReference type="ChEBI" id="CHEBI:30616"/>
        <dbReference type="ChEBI" id="CHEBI:44337"/>
        <dbReference type="ChEBI" id="CHEBI:57936"/>
        <dbReference type="ChEBI" id="CHEBI:456216"/>
        <dbReference type="EC" id="2.7.2.8"/>
    </reaction>
</comment>
<comment type="pathway">
    <text evidence="1">Amino-acid biosynthesis; L-arginine biosynthesis; N(2)-acetyl-L-ornithine from L-glutamate: step 2/4.</text>
</comment>
<comment type="subunit">
    <text evidence="1">Homodimer.</text>
</comment>
<comment type="subcellular location">
    <subcellularLocation>
        <location evidence="1">Cytoplasm</location>
    </subcellularLocation>
</comment>
<comment type="similarity">
    <text evidence="1">Belongs to the acetylglutamate kinase family. ArgB subfamily.</text>
</comment>
<comment type="sequence caution" evidence="2">
    <conflict type="erroneous initiation">
        <sequence resource="EMBL-CDS" id="CAH19351"/>
    </conflict>
</comment>
<dbReference type="EC" id="2.7.2.8" evidence="1"/>
<dbReference type="EMBL" id="BX936398">
    <property type="protein sequence ID" value="CAH19351.1"/>
    <property type="status" value="ALT_INIT"/>
    <property type="molecule type" value="Genomic_DNA"/>
</dbReference>
<dbReference type="SMR" id="Q66G71"/>
<dbReference type="KEGG" id="yps:YPTB0111"/>
<dbReference type="UniPathway" id="UPA00068">
    <property type="reaction ID" value="UER00107"/>
</dbReference>
<dbReference type="Proteomes" id="UP000001011">
    <property type="component" value="Chromosome"/>
</dbReference>
<dbReference type="GO" id="GO:0005737">
    <property type="term" value="C:cytoplasm"/>
    <property type="evidence" value="ECO:0007669"/>
    <property type="project" value="UniProtKB-SubCell"/>
</dbReference>
<dbReference type="GO" id="GO:0003991">
    <property type="term" value="F:acetylglutamate kinase activity"/>
    <property type="evidence" value="ECO:0007669"/>
    <property type="project" value="UniProtKB-UniRule"/>
</dbReference>
<dbReference type="GO" id="GO:0005524">
    <property type="term" value="F:ATP binding"/>
    <property type="evidence" value="ECO:0007669"/>
    <property type="project" value="UniProtKB-UniRule"/>
</dbReference>
<dbReference type="GO" id="GO:0042450">
    <property type="term" value="P:arginine biosynthetic process via ornithine"/>
    <property type="evidence" value="ECO:0007669"/>
    <property type="project" value="UniProtKB-UniRule"/>
</dbReference>
<dbReference type="GO" id="GO:0006526">
    <property type="term" value="P:L-arginine biosynthetic process"/>
    <property type="evidence" value="ECO:0007669"/>
    <property type="project" value="UniProtKB-UniPathway"/>
</dbReference>
<dbReference type="CDD" id="cd04249">
    <property type="entry name" value="AAK_NAGK-NC"/>
    <property type="match status" value="1"/>
</dbReference>
<dbReference type="FunFam" id="3.40.1160.10:FF:000008">
    <property type="entry name" value="Acetylglutamate kinase"/>
    <property type="match status" value="1"/>
</dbReference>
<dbReference type="Gene3D" id="3.40.1160.10">
    <property type="entry name" value="Acetylglutamate kinase-like"/>
    <property type="match status" value="1"/>
</dbReference>
<dbReference type="HAMAP" id="MF_00082">
    <property type="entry name" value="ArgB"/>
    <property type="match status" value="1"/>
</dbReference>
<dbReference type="InterPro" id="IPR036393">
    <property type="entry name" value="AceGlu_kinase-like_sf"/>
</dbReference>
<dbReference type="InterPro" id="IPR004662">
    <property type="entry name" value="AcgluKinase_fam"/>
</dbReference>
<dbReference type="InterPro" id="IPR037528">
    <property type="entry name" value="ArgB"/>
</dbReference>
<dbReference type="InterPro" id="IPR001048">
    <property type="entry name" value="Asp/Glu/Uridylate_kinase"/>
</dbReference>
<dbReference type="InterPro" id="IPR041731">
    <property type="entry name" value="NAGK-NC"/>
</dbReference>
<dbReference type="NCBIfam" id="TIGR00761">
    <property type="entry name" value="argB"/>
    <property type="match status" value="1"/>
</dbReference>
<dbReference type="PANTHER" id="PTHR23342">
    <property type="entry name" value="N-ACETYLGLUTAMATE SYNTHASE"/>
    <property type="match status" value="1"/>
</dbReference>
<dbReference type="PANTHER" id="PTHR23342:SF0">
    <property type="entry name" value="N-ACETYLGLUTAMATE SYNTHASE, MITOCHONDRIAL"/>
    <property type="match status" value="1"/>
</dbReference>
<dbReference type="Pfam" id="PF00696">
    <property type="entry name" value="AA_kinase"/>
    <property type="match status" value="1"/>
</dbReference>
<dbReference type="PIRSF" id="PIRSF000728">
    <property type="entry name" value="NAGK"/>
    <property type="match status" value="1"/>
</dbReference>
<dbReference type="SUPFAM" id="SSF53633">
    <property type="entry name" value="Carbamate kinase-like"/>
    <property type="match status" value="1"/>
</dbReference>
<reference key="1">
    <citation type="journal article" date="2004" name="Proc. Natl. Acad. Sci. U.S.A.">
        <title>Insights into the evolution of Yersinia pestis through whole-genome comparison with Yersinia pseudotuberculosis.</title>
        <authorList>
            <person name="Chain P.S.G."/>
            <person name="Carniel E."/>
            <person name="Larimer F.W."/>
            <person name="Lamerdin J."/>
            <person name="Stoutland P.O."/>
            <person name="Regala W.M."/>
            <person name="Georgescu A.M."/>
            <person name="Vergez L.M."/>
            <person name="Land M.L."/>
            <person name="Motin V.L."/>
            <person name="Brubaker R.R."/>
            <person name="Fowler J."/>
            <person name="Hinnebusch J."/>
            <person name="Marceau M."/>
            <person name="Medigue C."/>
            <person name="Simonet M."/>
            <person name="Chenal-Francisque V."/>
            <person name="Souza B."/>
            <person name="Dacheux D."/>
            <person name="Elliott J.M."/>
            <person name="Derbise A."/>
            <person name="Hauser L.J."/>
            <person name="Garcia E."/>
        </authorList>
    </citation>
    <scope>NUCLEOTIDE SEQUENCE [LARGE SCALE GENOMIC DNA]</scope>
    <source>
        <strain>IP32953</strain>
    </source>
</reference>
<name>ARGB_YERPS</name>